<proteinExistence type="evidence at protein level"/>
<sequence>YPPKPENPGEDAPPEELAKYYSALRHYINLITRQRY</sequence>
<feature type="peptide" id="PRO_0000044813" description="Peptide YY-like">
    <location>
        <begin position="1"/>
        <end position="36"/>
    </location>
</feature>
<feature type="modified residue" description="Tyrosine amide" evidence="1">
    <location>
        <position position="36"/>
    </location>
</feature>
<accession>P69094</accession>
<accession>P09473</accession>
<comment type="function">
    <text>Elicits an increase in arterial blood pressure.</text>
</comment>
<comment type="subcellular location">
    <subcellularLocation>
        <location>Secreted</location>
    </subcellularLocation>
</comment>
<comment type="similarity">
    <text evidence="2">Belongs to the NPY family.</text>
</comment>
<keyword id="KW-0027">Amidation</keyword>
<keyword id="KW-0903">Direct protein sequencing</keyword>
<keyword id="KW-0372">Hormone</keyword>
<keyword id="KW-0964">Secreted</keyword>
<reference key="1">
    <citation type="journal article" date="1987" name="Gen. Comp. Endocrinol.">
        <title>Isolation and structures of alligator gar (Lepisosteus spatula) insulin and pancreatic polypeptide.</title>
        <authorList>
            <person name="Pollock H.G."/>
            <person name="Kimmel J.R."/>
            <person name="Hamilton J.W."/>
            <person name="Rouse J.B."/>
            <person name="Ebner K.E."/>
            <person name="Lance V."/>
            <person name="Rawitch A.B."/>
        </authorList>
    </citation>
    <scope>PROTEIN SEQUENCE</scope>
    <scope>AMIDATION AT TYR-36</scope>
    <source>
        <tissue>Pancreas</tissue>
    </source>
</reference>
<organism>
    <name type="scientific">Atractosteus spatula</name>
    <name type="common">Alligator gar</name>
    <name type="synonym">Lepisosteus spatula</name>
    <dbReference type="NCBI Taxonomy" id="7917"/>
    <lineage>
        <taxon>Eukaryota</taxon>
        <taxon>Metazoa</taxon>
        <taxon>Chordata</taxon>
        <taxon>Craniata</taxon>
        <taxon>Vertebrata</taxon>
        <taxon>Euteleostomi</taxon>
        <taxon>Actinopterygii</taxon>
        <taxon>Neopterygii</taxon>
        <taxon>Holostei</taxon>
        <taxon>Semionotiformes</taxon>
        <taxon>Lepisosteidae</taxon>
        <taxon>Atractosteus</taxon>
    </lineage>
</organism>
<name>PYY_ATRSP</name>
<dbReference type="PIR" id="S07215">
    <property type="entry name" value="PCGXA"/>
</dbReference>
<dbReference type="SMR" id="P69094"/>
<dbReference type="GO" id="GO:0005615">
    <property type="term" value="C:extracellular space"/>
    <property type="evidence" value="ECO:0007669"/>
    <property type="project" value="TreeGrafter"/>
</dbReference>
<dbReference type="GO" id="GO:0005184">
    <property type="term" value="F:neuropeptide hormone activity"/>
    <property type="evidence" value="ECO:0007669"/>
    <property type="project" value="TreeGrafter"/>
</dbReference>
<dbReference type="GO" id="GO:0031841">
    <property type="term" value="F:neuropeptide Y receptor binding"/>
    <property type="evidence" value="ECO:0007669"/>
    <property type="project" value="TreeGrafter"/>
</dbReference>
<dbReference type="GO" id="GO:0007631">
    <property type="term" value="P:feeding behavior"/>
    <property type="evidence" value="ECO:0007669"/>
    <property type="project" value="TreeGrafter"/>
</dbReference>
<dbReference type="GO" id="GO:0007218">
    <property type="term" value="P:neuropeptide signaling pathway"/>
    <property type="evidence" value="ECO:0007669"/>
    <property type="project" value="TreeGrafter"/>
</dbReference>
<dbReference type="CDD" id="cd00126">
    <property type="entry name" value="PAH"/>
    <property type="match status" value="1"/>
</dbReference>
<dbReference type="Gene3D" id="6.10.250.900">
    <property type="match status" value="1"/>
</dbReference>
<dbReference type="InterPro" id="IPR001955">
    <property type="entry name" value="Pancreatic_hormone-like"/>
</dbReference>
<dbReference type="InterPro" id="IPR020392">
    <property type="entry name" value="Pancreatic_hormone-like_CS"/>
</dbReference>
<dbReference type="PANTHER" id="PTHR10533">
    <property type="entry name" value="NEUROPEPTIDE Y/PANCREATIC HORMONE/PEPTIDE YY"/>
    <property type="match status" value="1"/>
</dbReference>
<dbReference type="PANTHER" id="PTHR10533:SF14">
    <property type="entry name" value="PEPTIDE YY-RELATED"/>
    <property type="match status" value="1"/>
</dbReference>
<dbReference type="Pfam" id="PF00159">
    <property type="entry name" value="Hormone_3"/>
    <property type="match status" value="1"/>
</dbReference>
<dbReference type="PRINTS" id="PR00278">
    <property type="entry name" value="PANCHORMONE"/>
</dbReference>
<dbReference type="SMART" id="SM00309">
    <property type="entry name" value="PAH"/>
    <property type="match status" value="1"/>
</dbReference>
<dbReference type="PROSITE" id="PS00265">
    <property type="entry name" value="PANCREATIC_HORMONE_1"/>
    <property type="match status" value="1"/>
</dbReference>
<dbReference type="PROSITE" id="PS50276">
    <property type="entry name" value="PANCREATIC_HORMONE_2"/>
    <property type="match status" value="1"/>
</dbReference>
<evidence type="ECO:0000269" key="1">
    <source>
    </source>
</evidence>
<evidence type="ECO:0000305" key="2"/>
<protein>
    <recommendedName>
        <fullName>Peptide YY-like</fullName>
        <shortName>PYY</shortName>
    </recommendedName>
    <alternativeName>
        <fullName>Neuropeptide Y-related peptide</fullName>
    </alternativeName>
</protein>